<organism>
    <name type="scientific">Chromobacterium violaceum (strain ATCC 12472 / DSM 30191 / JCM 1249 / CCUG 213 / NBRC 12614 / NCIMB 9131 / NCTC 9757 / MK)</name>
    <dbReference type="NCBI Taxonomy" id="243365"/>
    <lineage>
        <taxon>Bacteria</taxon>
        <taxon>Pseudomonadati</taxon>
        <taxon>Pseudomonadota</taxon>
        <taxon>Betaproteobacteria</taxon>
        <taxon>Neisseriales</taxon>
        <taxon>Chromobacteriaceae</taxon>
        <taxon>Chromobacterium</taxon>
    </lineage>
</organism>
<gene>
    <name evidence="1" type="primary">darP</name>
    <name type="ordered locus">CV_3198</name>
</gene>
<accession>Q7NT63</accession>
<comment type="function">
    <text evidence="1">Member of a network of 50S ribosomal subunit biogenesis factors which assembles along the 30S-50S interface, preventing incorrect 23S rRNA structures from forming. Promotes peptidyl transferase center (PTC) maturation.</text>
</comment>
<comment type="subcellular location">
    <subcellularLocation>
        <location evidence="1">Cytoplasm</location>
    </subcellularLocation>
    <text evidence="1">Associates with late stage pre-50S ribosomal subunits.</text>
</comment>
<comment type="similarity">
    <text evidence="1">Belongs to the DarP family.</text>
</comment>
<feature type="chain" id="PRO_0000208212" description="Dual-action ribosomal maturation protein DarP">
    <location>
        <begin position="1"/>
        <end position="180"/>
    </location>
</feature>
<evidence type="ECO:0000255" key="1">
    <source>
        <dbReference type="HAMAP-Rule" id="MF_00765"/>
    </source>
</evidence>
<dbReference type="EMBL" id="AE016825">
    <property type="protein sequence ID" value="AAQ60864.1"/>
    <property type="molecule type" value="Genomic_DNA"/>
</dbReference>
<dbReference type="RefSeq" id="WP_011136745.1">
    <property type="nucleotide sequence ID" value="NC_005085.1"/>
</dbReference>
<dbReference type="SMR" id="Q7NT63"/>
<dbReference type="STRING" id="243365.CV_3198"/>
<dbReference type="GeneID" id="66364420"/>
<dbReference type="KEGG" id="cvi:CV_3198"/>
<dbReference type="eggNOG" id="COG3028">
    <property type="taxonomic scope" value="Bacteria"/>
</dbReference>
<dbReference type="HOGENOM" id="CLU_106757_1_0_4"/>
<dbReference type="OrthoDB" id="5293604at2"/>
<dbReference type="Proteomes" id="UP000001424">
    <property type="component" value="Chromosome"/>
</dbReference>
<dbReference type="GO" id="GO:0005829">
    <property type="term" value="C:cytosol"/>
    <property type="evidence" value="ECO:0007669"/>
    <property type="project" value="TreeGrafter"/>
</dbReference>
<dbReference type="GO" id="GO:0043022">
    <property type="term" value="F:ribosome binding"/>
    <property type="evidence" value="ECO:0007669"/>
    <property type="project" value="UniProtKB-UniRule"/>
</dbReference>
<dbReference type="GO" id="GO:0019843">
    <property type="term" value="F:rRNA binding"/>
    <property type="evidence" value="ECO:0007669"/>
    <property type="project" value="UniProtKB-UniRule"/>
</dbReference>
<dbReference type="GO" id="GO:1902626">
    <property type="term" value="P:assembly of large subunit precursor of preribosome"/>
    <property type="evidence" value="ECO:0007669"/>
    <property type="project" value="UniProtKB-UniRule"/>
</dbReference>
<dbReference type="CDD" id="cd16331">
    <property type="entry name" value="YjgA-like"/>
    <property type="match status" value="1"/>
</dbReference>
<dbReference type="Gene3D" id="1.10.60.30">
    <property type="entry name" value="PSPTO4464-like domains"/>
    <property type="match status" value="2"/>
</dbReference>
<dbReference type="HAMAP" id="MF_00765">
    <property type="entry name" value="DarP"/>
    <property type="match status" value="1"/>
</dbReference>
<dbReference type="InterPro" id="IPR006839">
    <property type="entry name" value="DarP"/>
</dbReference>
<dbReference type="InterPro" id="IPR023153">
    <property type="entry name" value="DarP_sf"/>
</dbReference>
<dbReference type="NCBIfam" id="NF003593">
    <property type="entry name" value="PRK05255.1-1"/>
    <property type="match status" value="1"/>
</dbReference>
<dbReference type="PANTHER" id="PTHR38101">
    <property type="entry name" value="UPF0307 PROTEIN YJGA"/>
    <property type="match status" value="1"/>
</dbReference>
<dbReference type="PANTHER" id="PTHR38101:SF1">
    <property type="entry name" value="UPF0307 PROTEIN YJGA"/>
    <property type="match status" value="1"/>
</dbReference>
<dbReference type="Pfam" id="PF04751">
    <property type="entry name" value="DarP"/>
    <property type="match status" value="1"/>
</dbReference>
<dbReference type="PIRSF" id="PIRSF016183">
    <property type="entry name" value="UCP016183"/>
    <property type="match status" value="1"/>
</dbReference>
<dbReference type="SUPFAM" id="SSF158710">
    <property type="entry name" value="PSPTO4464-like"/>
    <property type="match status" value="1"/>
</dbReference>
<name>DARP_CHRVO</name>
<protein>
    <recommendedName>
        <fullName evidence="1">Dual-action ribosomal maturation protein DarP</fullName>
    </recommendedName>
    <alternativeName>
        <fullName evidence="1">Large ribosomal subunit assembly factor DarP</fullName>
    </alternativeName>
</protein>
<sequence>MTDYQNDDDGFVSKSQRKRDMDALQDLGRELVDLSKDTLKKMQLPEDLLTAVLDYKRFTANGALRRQMQYIGKLMRDVDPEPIREYLKVLKGESSEHIAWQHLLERWREKLMADDKALSDFLAAFPEGDPQQLRTLMRNARKELQDNKPPKAYRQLFQEIKALIPEPGKPRLWQKDEDEE</sequence>
<reference key="1">
    <citation type="journal article" date="2003" name="Proc. Natl. Acad. Sci. U.S.A.">
        <title>The complete genome sequence of Chromobacterium violaceum reveals remarkable and exploitable bacterial adaptability.</title>
        <authorList>
            <person name="Vasconcelos A.T.R."/>
            <person name="de Almeida D.F."/>
            <person name="Hungria M."/>
            <person name="Guimaraes C.T."/>
            <person name="Antonio R.V."/>
            <person name="Almeida F.C."/>
            <person name="de Almeida L.G.P."/>
            <person name="de Almeida R."/>
            <person name="Alves-Gomes J.A."/>
            <person name="Andrade E.M."/>
            <person name="Araripe J."/>
            <person name="de Araujo M.F.F."/>
            <person name="Astolfi-Filho S."/>
            <person name="Azevedo V."/>
            <person name="Baptista A.J."/>
            <person name="Bataus L.A.M."/>
            <person name="Batista J.S."/>
            <person name="Belo A."/>
            <person name="van den Berg C."/>
            <person name="Bogo M."/>
            <person name="Bonatto S."/>
            <person name="Bordignon J."/>
            <person name="Brigido M.M."/>
            <person name="Brito C.A."/>
            <person name="Brocchi M."/>
            <person name="Burity H.A."/>
            <person name="Camargo A.A."/>
            <person name="Cardoso D.D.P."/>
            <person name="Carneiro N.P."/>
            <person name="Carraro D.M."/>
            <person name="Carvalho C.M.B."/>
            <person name="Cascardo J.C.M."/>
            <person name="Cavada B.S."/>
            <person name="Chueire L.M.O."/>
            <person name="Creczynski-Pasa T.B."/>
            <person name="Cunha-Junior N.C."/>
            <person name="Fagundes N."/>
            <person name="Falcao C.L."/>
            <person name="Fantinatti F."/>
            <person name="Farias I.P."/>
            <person name="Felipe M.S.S."/>
            <person name="Ferrari L.P."/>
            <person name="Ferro J.A."/>
            <person name="Ferro M.I.T."/>
            <person name="Franco G.R."/>
            <person name="Freitas N.S.A."/>
            <person name="Furlan L.R."/>
            <person name="Gazzinelli R.T."/>
            <person name="Gomes E.A."/>
            <person name="Goncalves P.R."/>
            <person name="Grangeiro T.B."/>
            <person name="Grattapaglia D."/>
            <person name="Grisard E.C."/>
            <person name="Hanna E.S."/>
            <person name="Jardim S.N."/>
            <person name="Laurino J."/>
            <person name="Leoi L.C.T."/>
            <person name="Lima L.F.A."/>
            <person name="Loureiro M.F."/>
            <person name="Lyra M.C.C.P."/>
            <person name="Madeira H.M.F."/>
            <person name="Manfio G.P."/>
            <person name="Maranhao A.Q."/>
            <person name="Martins W.S."/>
            <person name="di Mauro S.M.Z."/>
            <person name="de Medeiros S.R.B."/>
            <person name="Meissner R.V."/>
            <person name="Moreira M.A.M."/>
            <person name="Nascimento F.F."/>
            <person name="Nicolas M.F."/>
            <person name="Oliveira J.G."/>
            <person name="Oliveira S.C."/>
            <person name="Paixao R.F.C."/>
            <person name="Parente J.A."/>
            <person name="Pedrosa F.O."/>
            <person name="Pena S.D.J."/>
            <person name="Pereira J.O."/>
            <person name="Pereira M."/>
            <person name="Pinto L.S.R.C."/>
            <person name="Pinto L.S."/>
            <person name="Porto J.I.R."/>
            <person name="Potrich D.P."/>
            <person name="Ramalho-Neto C.E."/>
            <person name="Reis A.M.M."/>
            <person name="Rigo L.U."/>
            <person name="Rondinelli E."/>
            <person name="Santos E.B.P."/>
            <person name="Santos F.R."/>
            <person name="Schneider M.P.C."/>
            <person name="Seuanez H.N."/>
            <person name="Silva A.M.R."/>
            <person name="da Silva A.L.C."/>
            <person name="Silva D.W."/>
            <person name="Silva R."/>
            <person name="Simoes I.C."/>
            <person name="Simon D."/>
            <person name="Soares C.M.A."/>
            <person name="Soares R.B.A."/>
            <person name="Souza E.M."/>
            <person name="Souza K.R.L."/>
            <person name="Souza R.C."/>
            <person name="Steffens M.B.R."/>
            <person name="Steindel M."/>
            <person name="Teixeira S.R."/>
            <person name="Urmenyi T."/>
            <person name="Vettore A."/>
            <person name="Wassem R."/>
            <person name="Zaha A."/>
            <person name="Simpson A.J.G."/>
        </authorList>
    </citation>
    <scope>NUCLEOTIDE SEQUENCE [LARGE SCALE GENOMIC DNA]</scope>
    <source>
        <strain>ATCC 12472 / DSM 30191 / JCM 1249 / CCUG 213 / NBRC 12614 / NCIMB 9131 / NCTC 9757 / MK</strain>
    </source>
</reference>
<proteinExistence type="inferred from homology"/>
<keyword id="KW-0963">Cytoplasm</keyword>
<keyword id="KW-1185">Reference proteome</keyword>
<keyword id="KW-0690">Ribosome biogenesis</keyword>
<keyword id="KW-0694">RNA-binding</keyword>
<keyword id="KW-0699">rRNA-binding</keyword>